<proteinExistence type="inferred from homology"/>
<evidence type="ECO:0000250" key="1"/>
<evidence type="ECO:0000255" key="2"/>
<evidence type="ECO:0000255" key="3">
    <source>
        <dbReference type="PROSITE-ProRule" id="PRU10039"/>
    </source>
</evidence>
<evidence type="ECO:0000305" key="4"/>
<gene>
    <name type="primary">ache</name>
</gene>
<comment type="function">
    <text>Terminates signal transduction at the neuromuscular junction by rapid hydrolysis of the acetylcholine released into the synaptic cleft.</text>
</comment>
<comment type="catalytic activity">
    <reaction>
        <text>acetylcholine + H2O = choline + acetate + H(+)</text>
        <dbReference type="Rhea" id="RHEA:17561"/>
        <dbReference type="ChEBI" id="CHEBI:15354"/>
        <dbReference type="ChEBI" id="CHEBI:15355"/>
        <dbReference type="ChEBI" id="CHEBI:15377"/>
        <dbReference type="ChEBI" id="CHEBI:15378"/>
        <dbReference type="ChEBI" id="CHEBI:30089"/>
        <dbReference type="EC" id="3.1.1.7"/>
    </reaction>
</comment>
<comment type="subcellular location">
    <subcellularLocation>
        <location>Synapse</location>
    </subcellularLocation>
    <subcellularLocation>
        <location>Secreted</location>
    </subcellularLocation>
    <subcellularLocation>
        <location evidence="1">Cell membrane</location>
        <topology evidence="1">Peripheral membrane protein</topology>
    </subcellularLocation>
</comment>
<comment type="similarity">
    <text evidence="4">Belongs to the type-B carboxylesterase/lipase family.</text>
</comment>
<feature type="signal peptide" evidence="2">
    <location>
        <begin position="1"/>
        <end position="23"/>
    </location>
</feature>
<feature type="chain" id="PRO_0000008594" description="Acetylcholinesterase">
    <location>
        <begin position="24"/>
        <end position="633"/>
    </location>
</feature>
<feature type="active site" description="Acyl-ester intermediate" evidence="3">
    <location>
        <position position="225"/>
    </location>
</feature>
<feature type="active site" description="Charge relay system" evidence="1">
    <location>
        <position position="352"/>
    </location>
</feature>
<feature type="active site" description="Charge relay system" evidence="1">
    <location>
        <position position="494"/>
    </location>
</feature>
<feature type="glycosylation site" description="N-linked (GlcNAc...) asparagine" evidence="2">
    <location>
        <position position="133"/>
    </location>
</feature>
<feature type="glycosylation site" description="N-linked (GlcNAc...) asparagine" evidence="2">
    <location>
        <position position="184"/>
    </location>
</feature>
<feature type="glycosylation site" description="N-linked (GlcNAc...) asparagine" evidence="2">
    <location>
        <position position="283"/>
    </location>
</feature>
<feature type="glycosylation site" description="N-linked (GlcNAc...) asparagine" evidence="2">
    <location>
        <position position="368"/>
    </location>
</feature>
<feature type="glycosylation site" description="N-linked (GlcNAc...) asparagine" evidence="2">
    <location>
        <position position="511"/>
    </location>
</feature>
<feature type="glycosylation site" description="N-linked (GlcNAc...) asparagine" evidence="2">
    <location>
        <position position="591"/>
    </location>
</feature>
<feature type="disulfide bond" evidence="1">
    <location>
        <begin position="91"/>
        <end position="118"/>
    </location>
</feature>
<feature type="disulfide bond" evidence="1">
    <location>
        <begin position="279"/>
        <end position="290"/>
    </location>
</feature>
<feature type="disulfide bond" evidence="1">
    <location>
        <begin position="427"/>
        <end position="579"/>
    </location>
</feature>
<feature type="disulfide bond" description="Interchain" evidence="1">
    <location>
        <position position="630"/>
    </location>
</feature>
<accession>O42275</accession>
<reference key="1">
    <citation type="journal article" date="1997" name="J. Biol. Chem.">
        <title>Cloning and expression of acetylcholinesterase from Electrophorus. Splicing pattern of the 3' exons in vivo and in transfected mammalian cells.</title>
        <authorList>
            <person name="Simon S."/>
            <person name="Massoulie J."/>
        </authorList>
    </citation>
    <scope>NUCLEOTIDE SEQUENCE [GENOMIC DNA]</scope>
</reference>
<sequence length="633" mass="71815">MKILDALLFPVIFIMFFIHLSIAQTDPELTIMTRLGQVQGTRLPVPDRSHVIAFLGIPFAEPPLGKMRFKPPEPKKPWNDVFDARDYPSACYQYVDTSYPGFSGTEMWNPNRMMSEDCLYLNVWVPATPRPHNLTVMVWIYGGGFYSGSSSLDVYDGRYLAHSEKVVVVSMNYRVSAFGFLALNGSAEAPGNVGLLDQRLALQWVQDNIHFFGGNPKQVTIFGESAGAASVGMHLLSPDSRPKFTRAILQSGVPNGPWRTVSFDEARRRAIKLGRLVGCPDGNDTDLIDCLRSKQPQDLIDQEWLVLPFSGLFRFSFVPVIDGVVFPDTPEAMLNSGNFKDTQILLGVNQNEGSYFLIYGAPGFSKDNESLITREDFLQGVKMSVPHANEIGLEAVILQYTDWMDEDNPIKNREAMDDIVGDHNVVCPLQHFAKMYAQYSILQGQTGTASQGNLGWGNSGSASNSGNSQVSVYLYMFDHRASNLVWPEWMGVIHGYEIEFVFGLPLEKRLNYTLEEEKLSRRMMKYWANFARTGNPNINVDGSIDSRRRWPVFTSTEQKHVGLNTDSLKVHKGLKSQFCALWNRFLPRLLNVTENIDDAERQWKAEFHRWSSYMMHWKNQFDHYSKQERCTNL</sequence>
<name>ACES_ELEEL</name>
<protein>
    <recommendedName>
        <fullName>Acetylcholinesterase</fullName>
        <shortName>AChE</shortName>
        <ecNumber>3.1.1.7</ecNumber>
    </recommendedName>
</protein>
<dbReference type="EC" id="3.1.1.7"/>
<dbReference type="EMBL" id="AF030422">
    <property type="protein sequence ID" value="AAB86606.1"/>
    <property type="molecule type" value="Genomic_DNA"/>
</dbReference>
<dbReference type="SMR" id="O42275"/>
<dbReference type="STRING" id="8005.ENSEEEP00000024330"/>
<dbReference type="BindingDB" id="O42275"/>
<dbReference type="ChEMBL" id="CHEMBL4078"/>
<dbReference type="DrugCentral" id="O42275"/>
<dbReference type="ESTHER" id="eleel-ACHE">
    <property type="family name" value="ACHE"/>
</dbReference>
<dbReference type="GlyCosmos" id="O42275">
    <property type="glycosylation" value="6 sites, No reported glycans"/>
</dbReference>
<dbReference type="ABCD" id="O42275">
    <property type="antibodies" value="3 sequenced antibodies"/>
</dbReference>
<dbReference type="BRENDA" id="3.1.1.7">
    <property type="organism ID" value="2051"/>
</dbReference>
<dbReference type="SABIO-RK" id="O42275"/>
<dbReference type="Proteomes" id="UP000314983">
    <property type="component" value="Unassembled WGS sequence"/>
</dbReference>
<dbReference type="GO" id="GO:0005615">
    <property type="term" value="C:extracellular space"/>
    <property type="evidence" value="ECO:0007669"/>
    <property type="project" value="TreeGrafter"/>
</dbReference>
<dbReference type="GO" id="GO:0005886">
    <property type="term" value="C:plasma membrane"/>
    <property type="evidence" value="ECO:0007669"/>
    <property type="project" value="UniProtKB-SubCell"/>
</dbReference>
<dbReference type="GO" id="GO:0045202">
    <property type="term" value="C:synapse"/>
    <property type="evidence" value="ECO:0007669"/>
    <property type="project" value="UniProtKB-SubCell"/>
</dbReference>
<dbReference type="GO" id="GO:0003990">
    <property type="term" value="F:acetylcholinesterase activity"/>
    <property type="evidence" value="ECO:0007669"/>
    <property type="project" value="UniProtKB-EC"/>
</dbReference>
<dbReference type="GO" id="GO:0006581">
    <property type="term" value="P:acetylcholine catabolic process"/>
    <property type="evidence" value="ECO:0007669"/>
    <property type="project" value="TreeGrafter"/>
</dbReference>
<dbReference type="GO" id="GO:0019695">
    <property type="term" value="P:choline metabolic process"/>
    <property type="evidence" value="ECO:0007669"/>
    <property type="project" value="TreeGrafter"/>
</dbReference>
<dbReference type="CDD" id="cd00312">
    <property type="entry name" value="Esterase_lipase"/>
    <property type="match status" value="1"/>
</dbReference>
<dbReference type="FunFam" id="3.40.50.1820:FF:000029">
    <property type="entry name" value="Acetylcholinesterase"/>
    <property type="match status" value="1"/>
</dbReference>
<dbReference type="Gene3D" id="3.40.50.1820">
    <property type="entry name" value="alpha/beta hydrolase"/>
    <property type="match status" value="1"/>
</dbReference>
<dbReference type="InterPro" id="IPR029058">
    <property type="entry name" value="AB_hydrolase_fold"/>
</dbReference>
<dbReference type="InterPro" id="IPR050654">
    <property type="entry name" value="AChE-related_enzymes"/>
</dbReference>
<dbReference type="InterPro" id="IPR014788">
    <property type="entry name" value="AChE_tetra"/>
</dbReference>
<dbReference type="InterPro" id="IPR002018">
    <property type="entry name" value="CarbesteraseB"/>
</dbReference>
<dbReference type="InterPro" id="IPR019826">
    <property type="entry name" value="Carboxylesterase_B_AS"/>
</dbReference>
<dbReference type="InterPro" id="IPR019819">
    <property type="entry name" value="Carboxylesterase_B_CS"/>
</dbReference>
<dbReference type="InterPro" id="IPR000997">
    <property type="entry name" value="Cholinesterase"/>
</dbReference>
<dbReference type="PANTHER" id="PTHR43918">
    <property type="entry name" value="ACETYLCHOLINESTERASE"/>
    <property type="match status" value="1"/>
</dbReference>
<dbReference type="PANTHER" id="PTHR43918:SF11">
    <property type="entry name" value="ACETYLCHOLINESTERASE"/>
    <property type="match status" value="1"/>
</dbReference>
<dbReference type="Pfam" id="PF08674">
    <property type="entry name" value="AChE_tetra"/>
    <property type="match status" value="1"/>
</dbReference>
<dbReference type="Pfam" id="PF00135">
    <property type="entry name" value="COesterase"/>
    <property type="match status" value="1"/>
</dbReference>
<dbReference type="PRINTS" id="PR00878">
    <property type="entry name" value="CHOLNESTRASE"/>
</dbReference>
<dbReference type="SUPFAM" id="SSF53474">
    <property type="entry name" value="alpha/beta-Hydrolases"/>
    <property type="match status" value="1"/>
</dbReference>
<dbReference type="PROSITE" id="PS00122">
    <property type="entry name" value="CARBOXYLESTERASE_B_1"/>
    <property type="match status" value="1"/>
</dbReference>
<dbReference type="PROSITE" id="PS00941">
    <property type="entry name" value="CARBOXYLESTERASE_B_2"/>
    <property type="match status" value="1"/>
</dbReference>
<organism>
    <name type="scientific">Electrophorus electricus</name>
    <name type="common">Electric eel</name>
    <name type="synonym">Gymnotus electricus</name>
    <dbReference type="NCBI Taxonomy" id="8005"/>
    <lineage>
        <taxon>Eukaryota</taxon>
        <taxon>Metazoa</taxon>
        <taxon>Chordata</taxon>
        <taxon>Craniata</taxon>
        <taxon>Vertebrata</taxon>
        <taxon>Euteleostomi</taxon>
        <taxon>Actinopterygii</taxon>
        <taxon>Neopterygii</taxon>
        <taxon>Teleostei</taxon>
        <taxon>Ostariophysi</taxon>
        <taxon>Gymnotiformes</taxon>
        <taxon>Gymnotoidei</taxon>
        <taxon>Gymnotidae</taxon>
        <taxon>Electrophorus</taxon>
    </lineage>
</organism>
<keyword id="KW-1003">Cell membrane</keyword>
<keyword id="KW-1015">Disulfide bond</keyword>
<keyword id="KW-0325">Glycoprotein</keyword>
<keyword id="KW-0378">Hydrolase</keyword>
<keyword id="KW-0472">Membrane</keyword>
<keyword id="KW-0531">Neurotransmitter degradation</keyword>
<keyword id="KW-1185">Reference proteome</keyword>
<keyword id="KW-0964">Secreted</keyword>
<keyword id="KW-0719">Serine esterase</keyword>
<keyword id="KW-0732">Signal</keyword>
<keyword id="KW-0770">Synapse</keyword>